<evidence type="ECO:0000255" key="1">
    <source>
        <dbReference type="HAMAP-Rule" id="MF_01713"/>
    </source>
</evidence>
<sequence>MSQIEFKNVSKVYPNGHVGLKNINLNIEKGEFAVIVGLSGAGKSTLLRSVNRLHDITSGEIFIQGKSITKAHGKALLEMRRNIGMIFQHFNLVKRSSVLRNVLSGRVGYHPTWKMVLGLFPKEDKIKAMDALERVNILDKYNQRSDELSGGQQQRISIARALCQESEIILADEPVASLDPLTTKQVMDDLRKINQELGITILINLHFVDLAKEYGTRIIGLRDGEVVYDGPASEATDDVFSEIYGRTIKEDEKLGVN</sequence>
<organism>
    <name type="scientific">Staphylococcus aureus (strain MSSA476)</name>
    <dbReference type="NCBI Taxonomy" id="282459"/>
    <lineage>
        <taxon>Bacteria</taxon>
        <taxon>Bacillati</taxon>
        <taxon>Bacillota</taxon>
        <taxon>Bacilli</taxon>
        <taxon>Bacillales</taxon>
        <taxon>Staphylococcaceae</taxon>
        <taxon>Staphylococcus</taxon>
    </lineage>
</organism>
<name>PHNC_STAAS</name>
<comment type="function">
    <text evidence="1">Part of the ABC transporter complex PhnCDE involved in phosphonates import. Responsible for energy coupling to the transport system.</text>
</comment>
<comment type="catalytic activity">
    <reaction evidence="1">
        <text>phosphonate(out) + ATP + H2O = phosphonate(in) + ADP + phosphate + H(+)</text>
        <dbReference type="Rhea" id="RHEA:18065"/>
        <dbReference type="ChEBI" id="CHEBI:15377"/>
        <dbReference type="ChEBI" id="CHEBI:15378"/>
        <dbReference type="ChEBI" id="CHEBI:16215"/>
        <dbReference type="ChEBI" id="CHEBI:30616"/>
        <dbReference type="ChEBI" id="CHEBI:43474"/>
        <dbReference type="ChEBI" id="CHEBI:456216"/>
        <dbReference type="EC" id="7.3.2.2"/>
    </reaction>
</comment>
<comment type="subunit">
    <text evidence="1">The complex is composed of two ATP-binding proteins (PhnC), two transmembrane proteins (PhnE) and a solute-binding protein (PhnD).</text>
</comment>
<comment type="subcellular location">
    <subcellularLocation>
        <location evidence="1">Cell membrane</location>
        <topology evidence="1">Peripheral membrane protein</topology>
    </subcellularLocation>
</comment>
<comment type="similarity">
    <text evidence="1">Belongs to the ABC transporter superfamily. Phosphonates importer (TC 3.A.1.9.1) family.</text>
</comment>
<dbReference type="EC" id="7.3.2.2" evidence="1"/>
<dbReference type="EMBL" id="BX571857">
    <property type="protein sequence ID" value="CAG41884.1"/>
    <property type="molecule type" value="Genomic_DNA"/>
</dbReference>
<dbReference type="RefSeq" id="WP_000078092.1">
    <property type="nucleotide sequence ID" value="NC_002953.3"/>
</dbReference>
<dbReference type="SMR" id="Q6GCY2"/>
<dbReference type="KEGG" id="sas:SAS0116"/>
<dbReference type="HOGENOM" id="CLU_000604_1_22_9"/>
<dbReference type="GO" id="GO:0005886">
    <property type="term" value="C:plasma membrane"/>
    <property type="evidence" value="ECO:0007669"/>
    <property type="project" value="UniProtKB-SubCell"/>
</dbReference>
<dbReference type="GO" id="GO:0015416">
    <property type="term" value="F:ABC-type phosphonate transporter activity"/>
    <property type="evidence" value="ECO:0007669"/>
    <property type="project" value="UniProtKB-EC"/>
</dbReference>
<dbReference type="GO" id="GO:0005524">
    <property type="term" value="F:ATP binding"/>
    <property type="evidence" value="ECO:0007669"/>
    <property type="project" value="UniProtKB-KW"/>
</dbReference>
<dbReference type="GO" id="GO:0016887">
    <property type="term" value="F:ATP hydrolysis activity"/>
    <property type="evidence" value="ECO:0007669"/>
    <property type="project" value="InterPro"/>
</dbReference>
<dbReference type="CDD" id="cd03256">
    <property type="entry name" value="ABC_PhnC_transporter"/>
    <property type="match status" value="1"/>
</dbReference>
<dbReference type="Gene3D" id="3.40.50.300">
    <property type="entry name" value="P-loop containing nucleotide triphosphate hydrolases"/>
    <property type="match status" value="1"/>
</dbReference>
<dbReference type="InterPro" id="IPR003593">
    <property type="entry name" value="AAA+_ATPase"/>
</dbReference>
<dbReference type="InterPro" id="IPR003439">
    <property type="entry name" value="ABC_transporter-like_ATP-bd"/>
</dbReference>
<dbReference type="InterPro" id="IPR017871">
    <property type="entry name" value="ABC_transporter-like_CS"/>
</dbReference>
<dbReference type="InterPro" id="IPR012693">
    <property type="entry name" value="ABC_transpr_PhnC"/>
</dbReference>
<dbReference type="InterPro" id="IPR050086">
    <property type="entry name" value="MetN_ABC_transporter-like"/>
</dbReference>
<dbReference type="InterPro" id="IPR027417">
    <property type="entry name" value="P-loop_NTPase"/>
</dbReference>
<dbReference type="NCBIfam" id="TIGR02315">
    <property type="entry name" value="ABC_phnC"/>
    <property type="match status" value="1"/>
</dbReference>
<dbReference type="PANTHER" id="PTHR43166">
    <property type="entry name" value="AMINO ACID IMPORT ATP-BINDING PROTEIN"/>
    <property type="match status" value="1"/>
</dbReference>
<dbReference type="PANTHER" id="PTHR43166:SF6">
    <property type="entry name" value="PHOSPHONATES IMPORT ATP-BINDING PROTEIN PHNC"/>
    <property type="match status" value="1"/>
</dbReference>
<dbReference type="Pfam" id="PF00005">
    <property type="entry name" value="ABC_tran"/>
    <property type="match status" value="1"/>
</dbReference>
<dbReference type="SMART" id="SM00382">
    <property type="entry name" value="AAA"/>
    <property type="match status" value="1"/>
</dbReference>
<dbReference type="SUPFAM" id="SSF52540">
    <property type="entry name" value="P-loop containing nucleoside triphosphate hydrolases"/>
    <property type="match status" value="1"/>
</dbReference>
<dbReference type="PROSITE" id="PS00211">
    <property type="entry name" value="ABC_TRANSPORTER_1"/>
    <property type="match status" value="1"/>
</dbReference>
<dbReference type="PROSITE" id="PS50893">
    <property type="entry name" value="ABC_TRANSPORTER_2"/>
    <property type="match status" value="1"/>
</dbReference>
<dbReference type="PROSITE" id="PS51249">
    <property type="entry name" value="PHNC"/>
    <property type="match status" value="1"/>
</dbReference>
<protein>
    <recommendedName>
        <fullName evidence="1">Phosphonates import ATP-binding protein PhnC</fullName>
        <ecNumber evidence="1">7.3.2.2</ecNumber>
    </recommendedName>
</protein>
<proteinExistence type="inferred from homology"/>
<feature type="chain" id="PRO_0000092733" description="Phosphonates import ATP-binding protein PhnC">
    <location>
        <begin position="1"/>
        <end position="257"/>
    </location>
</feature>
<feature type="domain" description="ABC transporter" evidence="1">
    <location>
        <begin position="4"/>
        <end position="248"/>
    </location>
</feature>
<feature type="binding site" evidence="1">
    <location>
        <begin position="37"/>
        <end position="44"/>
    </location>
    <ligand>
        <name>ATP</name>
        <dbReference type="ChEBI" id="CHEBI:30616"/>
    </ligand>
</feature>
<reference key="1">
    <citation type="journal article" date="2004" name="Proc. Natl. Acad. Sci. U.S.A.">
        <title>Complete genomes of two clinical Staphylococcus aureus strains: evidence for the rapid evolution of virulence and drug resistance.</title>
        <authorList>
            <person name="Holden M.T.G."/>
            <person name="Feil E.J."/>
            <person name="Lindsay J.A."/>
            <person name="Peacock S.J."/>
            <person name="Day N.P.J."/>
            <person name="Enright M.C."/>
            <person name="Foster T.J."/>
            <person name="Moore C.E."/>
            <person name="Hurst L."/>
            <person name="Atkin R."/>
            <person name="Barron A."/>
            <person name="Bason N."/>
            <person name="Bentley S.D."/>
            <person name="Chillingworth C."/>
            <person name="Chillingworth T."/>
            <person name="Churcher C."/>
            <person name="Clark L."/>
            <person name="Corton C."/>
            <person name="Cronin A."/>
            <person name="Doggett J."/>
            <person name="Dowd L."/>
            <person name="Feltwell T."/>
            <person name="Hance Z."/>
            <person name="Harris B."/>
            <person name="Hauser H."/>
            <person name="Holroyd S."/>
            <person name="Jagels K."/>
            <person name="James K.D."/>
            <person name="Lennard N."/>
            <person name="Line A."/>
            <person name="Mayes R."/>
            <person name="Moule S."/>
            <person name="Mungall K."/>
            <person name="Ormond D."/>
            <person name="Quail M.A."/>
            <person name="Rabbinowitsch E."/>
            <person name="Rutherford K.M."/>
            <person name="Sanders M."/>
            <person name="Sharp S."/>
            <person name="Simmonds M."/>
            <person name="Stevens K."/>
            <person name="Whitehead S."/>
            <person name="Barrell B.G."/>
            <person name="Spratt B.G."/>
            <person name="Parkhill J."/>
        </authorList>
    </citation>
    <scope>NUCLEOTIDE SEQUENCE [LARGE SCALE GENOMIC DNA]</scope>
    <source>
        <strain>MSSA476</strain>
    </source>
</reference>
<keyword id="KW-0067">ATP-binding</keyword>
<keyword id="KW-1003">Cell membrane</keyword>
<keyword id="KW-0472">Membrane</keyword>
<keyword id="KW-0547">Nucleotide-binding</keyword>
<keyword id="KW-0918">Phosphonate transport</keyword>
<keyword id="KW-1278">Translocase</keyword>
<keyword id="KW-0813">Transport</keyword>
<accession>Q6GCY2</accession>
<gene>
    <name evidence="1" type="primary">phnC</name>
    <name type="ordered locus">SAS0116</name>
</gene>